<protein>
    <recommendedName>
        <fullName evidence="1">Phosphoglycerate kinase</fullName>
        <ecNumber evidence="1">2.7.2.3</ecNumber>
    </recommendedName>
</protein>
<reference key="1">
    <citation type="journal article" date="2007" name="J. Bacteriol.">
        <title>The complete genome sequence of the lactic acid bacterial paradigm Lactococcus lactis subsp. cremoris MG1363.</title>
        <authorList>
            <person name="Wegmann U."/>
            <person name="O'Connell-Motherway M."/>
            <person name="Zomer A."/>
            <person name="Buist G."/>
            <person name="Shearman C."/>
            <person name="Canchaya C."/>
            <person name="Ventura M."/>
            <person name="Goesmann A."/>
            <person name="Gasson M.J."/>
            <person name="Kuipers O.P."/>
            <person name="van Sinderen D."/>
            <person name="Kok J."/>
        </authorList>
    </citation>
    <scope>NUCLEOTIDE SEQUENCE [LARGE SCALE GENOMIC DNA]</scope>
    <source>
        <strain>MG1363</strain>
    </source>
</reference>
<name>PGK_LACLM</name>
<organism>
    <name type="scientific">Lactococcus lactis subsp. cremoris (strain MG1363)</name>
    <dbReference type="NCBI Taxonomy" id="416870"/>
    <lineage>
        <taxon>Bacteria</taxon>
        <taxon>Bacillati</taxon>
        <taxon>Bacillota</taxon>
        <taxon>Bacilli</taxon>
        <taxon>Lactobacillales</taxon>
        <taxon>Streptococcaceae</taxon>
        <taxon>Lactococcus</taxon>
        <taxon>Lactococcus cremoris subsp. cremoris</taxon>
    </lineage>
</organism>
<dbReference type="EC" id="2.7.2.3" evidence="1"/>
<dbReference type="EMBL" id="AM406671">
    <property type="protein sequence ID" value="CAL96859.1"/>
    <property type="molecule type" value="Genomic_DNA"/>
</dbReference>
<dbReference type="RefSeq" id="WP_011834333.1">
    <property type="nucleotide sequence ID" value="NC_009004.1"/>
</dbReference>
<dbReference type="SMR" id="A2RHX1"/>
<dbReference type="STRING" id="416870.llmg_0253"/>
<dbReference type="KEGG" id="llm:llmg_0253"/>
<dbReference type="eggNOG" id="COG0126">
    <property type="taxonomic scope" value="Bacteria"/>
</dbReference>
<dbReference type="HOGENOM" id="CLU_025427_0_2_9"/>
<dbReference type="OrthoDB" id="9808460at2"/>
<dbReference type="PhylomeDB" id="A2RHX1"/>
<dbReference type="UniPathway" id="UPA00109">
    <property type="reaction ID" value="UER00185"/>
</dbReference>
<dbReference type="Proteomes" id="UP000000364">
    <property type="component" value="Chromosome"/>
</dbReference>
<dbReference type="GO" id="GO:0005829">
    <property type="term" value="C:cytosol"/>
    <property type="evidence" value="ECO:0007669"/>
    <property type="project" value="TreeGrafter"/>
</dbReference>
<dbReference type="GO" id="GO:0043531">
    <property type="term" value="F:ADP binding"/>
    <property type="evidence" value="ECO:0007669"/>
    <property type="project" value="TreeGrafter"/>
</dbReference>
<dbReference type="GO" id="GO:0005524">
    <property type="term" value="F:ATP binding"/>
    <property type="evidence" value="ECO:0007669"/>
    <property type="project" value="UniProtKB-KW"/>
</dbReference>
<dbReference type="GO" id="GO:0004618">
    <property type="term" value="F:phosphoglycerate kinase activity"/>
    <property type="evidence" value="ECO:0007669"/>
    <property type="project" value="UniProtKB-UniRule"/>
</dbReference>
<dbReference type="GO" id="GO:0006094">
    <property type="term" value="P:gluconeogenesis"/>
    <property type="evidence" value="ECO:0007669"/>
    <property type="project" value="TreeGrafter"/>
</dbReference>
<dbReference type="GO" id="GO:0006096">
    <property type="term" value="P:glycolytic process"/>
    <property type="evidence" value="ECO:0007669"/>
    <property type="project" value="UniProtKB-UniRule"/>
</dbReference>
<dbReference type="FunFam" id="3.40.50.1260:FF:000001">
    <property type="entry name" value="Phosphoglycerate kinase"/>
    <property type="match status" value="1"/>
</dbReference>
<dbReference type="FunFam" id="3.40.50.1260:FF:000008">
    <property type="entry name" value="Phosphoglycerate kinase"/>
    <property type="match status" value="1"/>
</dbReference>
<dbReference type="Gene3D" id="3.40.50.1260">
    <property type="entry name" value="Phosphoglycerate kinase, N-terminal domain"/>
    <property type="match status" value="2"/>
</dbReference>
<dbReference type="HAMAP" id="MF_00145">
    <property type="entry name" value="Phosphoglyc_kinase"/>
    <property type="match status" value="1"/>
</dbReference>
<dbReference type="InterPro" id="IPR001576">
    <property type="entry name" value="Phosphoglycerate_kinase"/>
</dbReference>
<dbReference type="InterPro" id="IPR015911">
    <property type="entry name" value="Phosphoglycerate_kinase_CS"/>
</dbReference>
<dbReference type="InterPro" id="IPR015824">
    <property type="entry name" value="Phosphoglycerate_kinase_N"/>
</dbReference>
<dbReference type="InterPro" id="IPR036043">
    <property type="entry name" value="Phosphoglycerate_kinase_sf"/>
</dbReference>
<dbReference type="PANTHER" id="PTHR11406">
    <property type="entry name" value="PHOSPHOGLYCERATE KINASE"/>
    <property type="match status" value="1"/>
</dbReference>
<dbReference type="PANTHER" id="PTHR11406:SF23">
    <property type="entry name" value="PHOSPHOGLYCERATE KINASE 1, CHLOROPLASTIC-RELATED"/>
    <property type="match status" value="1"/>
</dbReference>
<dbReference type="Pfam" id="PF00162">
    <property type="entry name" value="PGK"/>
    <property type="match status" value="1"/>
</dbReference>
<dbReference type="PIRSF" id="PIRSF000724">
    <property type="entry name" value="Pgk"/>
    <property type="match status" value="1"/>
</dbReference>
<dbReference type="PRINTS" id="PR00477">
    <property type="entry name" value="PHGLYCKINASE"/>
</dbReference>
<dbReference type="SUPFAM" id="SSF53748">
    <property type="entry name" value="Phosphoglycerate kinase"/>
    <property type="match status" value="1"/>
</dbReference>
<dbReference type="PROSITE" id="PS00111">
    <property type="entry name" value="PGLYCERATE_KINASE"/>
    <property type="match status" value="1"/>
</dbReference>
<keyword id="KW-0067">ATP-binding</keyword>
<keyword id="KW-0963">Cytoplasm</keyword>
<keyword id="KW-0324">Glycolysis</keyword>
<keyword id="KW-0418">Kinase</keyword>
<keyword id="KW-0547">Nucleotide-binding</keyword>
<keyword id="KW-0808">Transferase</keyword>
<proteinExistence type="inferred from homology"/>
<sequence>MAKLTVKDVELKGKKVLVRVDFNVPIKDGVITNDNRITAALPTIKYILEQGGRAVLFSHLGRVKEESDKAGKSLAPVAKALSEKLGQDVVFPGATRGAELEAAINELKDGEILLVENTRFEDIDGKKESKNDPELGKYWASLGDGIFVNDAFGTAHRAHASNVGISANVEKAVAGFLLENEIAYIQEAVEAPERPFVAILGGSKVSDKIGVIENLLSKADKVIIGGGMAYTFLKAQGYEIGTSLVEDDKLDLAKELLEKAAGKLILPLDHKVANAFAGYTEVKETADQNIPAGFMGLDVANKTIADYNTQLEGAKTVVWNGPVGVFENPDFQAGTVGLMEAIVKQPGVKSIIGGGDSAAAAINLGYAEKFSWISTGGGASMELLEGKVLPGLAALTEK</sequence>
<feature type="chain" id="PRO_1000009623" description="Phosphoglycerate kinase">
    <location>
        <begin position="1"/>
        <end position="398"/>
    </location>
</feature>
<feature type="binding site" evidence="1">
    <location>
        <begin position="21"/>
        <end position="23"/>
    </location>
    <ligand>
        <name>substrate</name>
    </ligand>
</feature>
<feature type="binding site" evidence="1">
    <location>
        <position position="36"/>
    </location>
    <ligand>
        <name>substrate</name>
    </ligand>
</feature>
<feature type="binding site" evidence="1">
    <location>
        <begin position="59"/>
        <end position="62"/>
    </location>
    <ligand>
        <name>substrate</name>
    </ligand>
</feature>
<feature type="binding site" evidence="1">
    <location>
        <position position="119"/>
    </location>
    <ligand>
        <name>substrate</name>
    </ligand>
</feature>
<feature type="binding site" evidence="1">
    <location>
        <position position="157"/>
    </location>
    <ligand>
        <name>substrate</name>
    </ligand>
</feature>
<feature type="binding site" evidence="1">
    <location>
        <position position="208"/>
    </location>
    <ligand>
        <name>ATP</name>
        <dbReference type="ChEBI" id="CHEBI:30616"/>
    </ligand>
</feature>
<feature type="binding site" evidence="1">
    <location>
        <position position="296"/>
    </location>
    <ligand>
        <name>ATP</name>
        <dbReference type="ChEBI" id="CHEBI:30616"/>
    </ligand>
</feature>
<feature type="binding site" evidence="1">
    <location>
        <position position="327"/>
    </location>
    <ligand>
        <name>ATP</name>
        <dbReference type="ChEBI" id="CHEBI:30616"/>
    </ligand>
</feature>
<feature type="binding site" evidence="1">
    <location>
        <begin position="354"/>
        <end position="357"/>
    </location>
    <ligand>
        <name>ATP</name>
        <dbReference type="ChEBI" id="CHEBI:30616"/>
    </ligand>
</feature>
<gene>
    <name evidence="1" type="primary">pgk</name>
    <name type="ordered locus">llmg_0253</name>
</gene>
<accession>A2RHX1</accession>
<evidence type="ECO:0000255" key="1">
    <source>
        <dbReference type="HAMAP-Rule" id="MF_00145"/>
    </source>
</evidence>
<comment type="catalytic activity">
    <reaction evidence="1">
        <text>(2R)-3-phosphoglycerate + ATP = (2R)-3-phospho-glyceroyl phosphate + ADP</text>
        <dbReference type="Rhea" id="RHEA:14801"/>
        <dbReference type="ChEBI" id="CHEBI:30616"/>
        <dbReference type="ChEBI" id="CHEBI:57604"/>
        <dbReference type="ChEBI" id="CHEBI:58272"/>
        <dbReference type="ChEBI" id="CHEBI:456216"/>
        <dbReference type="EC" id="2.7.2.3"/>
    </reaction>
</comment>
<comment type="pathway">
    <text evidence="1">Carbohydrate degradation; glycolysis; pyruvate from D-glyceraldehyde 3-phosphate: step 2/5.</text>
</comment>
<comment type="subunit">
    <text evidence="1">Monomer.</text>
</comment>
<comment type="subcellular location">
    <subcellularLocation>
        <location evidence="1">Cytoplasm</location>
    </subcellularLocation>
</comment>
<comment type="similarity">
    <text evidence="1">Belongs to the phosphoglycerate kinase family.</text>
</comment>